<dbReference type="EMBL" id="AE017244">
    <property type="protein sequence ID" value="AAZ53453.1"/>
    <property type="molecule type" value="Genomic_DNA"/>
</dbReference>
<dbReference type="RefSeq" id="WP_011205922.1">
    <property type="nucleotide sequence ID" value="NC_007332.1"/>
</dbReference>
<dbReference type="SMR" id="Q4A8T6"/>
<dbReference type="GeneID" id="41334362"/>
<dbReference type="KEGG" id="mhp:MHP7448_0076"/>
<dbReference type="HOGENOM" id="CLU_072226_1_1_14"/>
<dbReference type="Proteomes" id="UP000000553">
    <property type="component" value="Chromosome"/>
</dbReference>
<dbReference type="GO" id="GO:0015935">
    <property type="term" value="C:small ribosomal subunit"/>
    <property type="evidence" value="ECO:0007669"/>
    <property type="project" value="InterPro"/>
</dbReference>
<dbReference type="GO" id="GO:0019843">
    <property type="term" value="F:rRNA binding"/>
    <property type="evidence" value="ECO:0007669"/>
    <property type="project" value="UniProtKB-UniRule"/>
</dbReference>
<dbReference type="GO" id="GO:0003735">
    <property type="term" value="F:structural constituent of ribosome"/>
    <property type="evidence" value="ECO:0007669"/>
    <property type="project" value="InterPro"/>
</dbReference>
<dbReference type="GO" id="GO:0000049">
    <property type="term" value="F:tRNA binding"/>
    <property type="evidence" value="ECO:0007669"/>
    <property type="project" value="UniProtKB-UniRule"/>
</dbReference>
<dbReference type="GO" id="GO:0006412">
    <property type="term" value="P:translation"/>
    <property type="evidence" value="ECO:0007669"/>
    <property type="project" value="UniProtKB-UniRule"/>
</dbReference>
<dbReference type="CDD" id="cd14869">
    <property type="entry name" value="uS7_Bacteria"/>
    <property type="match status" value="1"/>
</dbReference>
<dbReference type="FunFam" id="1.10.455.10:FF:000001">
    <property type="entry name" value="30S ribosomal protein S7"/>
    <property type="match status" value="1"/>
</dbReference>
<dbReference type="Gene3D" id="1.10.455.10">
    <property type="entry name" value="Ribosomal protein S7 domain"/>
    <property type="match status" value="1"/>
</dbReference>
<dbReference type="HAMAP" id="MF_00480_B">
    <property type="entry name" value="Ribosomal_uS7_B"/>
    <property type="match status" value="1"/>
</dbReference>
<dbReference type="InterPro" id="IPR000235">
    <property type="entry name" value="Ribosomal_uS7"/>
</dbReference>
<dbReference type="InterPro" id="IPR005717">
    <property type="entry name" value="Ribosomal_uS7_bac/org-type"/>
</dbReference>
<dbReference type="InterPro" id="IPR020606">
    <property type="entry name" value="Ribosomal_uS7_CS"/>
</dbReference>
<dbReference type="InterPro" id="IPR023798">
    <property type="entry name" value="Ribosomal_uS7_dom"/>
</dbReference>
<dbReference type="InterPro" id="IPR036823">
    <property type="entry name" value="Ribosomal_uS7_dom_sf"/>
</dbReference>
<dbReference type="NCBIfam" id="TIGR01029">
    <property type="entry name" value="rpsG_bact"/>
    <property type="match status" value="1"/>
</dbReference>
<dbReference type="PANTHER" id="PTHR11205">
    <property type="entry name" value="RIBOSOMAL PROTEIN S7"/>
    <property type="match status" value="1"/>
</dbReference>
<dbReference type="Pfam" id="PF00177">
    <property type="entry name" value="Ribosomal_S7"/>
    <property type="match status" value="1"/>
</dbReference>
<dbReference type="PIRSF" id="PIRSF002122">
    <property type="entry name" value="RPS7p_RPS7a_RPS5e_RPS7o"/>
    <property type="match status" value="1"/>
</dbReference>
<dbReference type="SUPFAM" id="SSF47973">
    <property type="entry name" value="Ribosomal protein S7"/>
    <property type="match status" value="1"/>
</dbReference>
<dbReference type="PROSITE" id="PS00052">
    <property type="entry name" value="RIBOSOMAL_S7"/>
    <property type="match status" value="1"/>
</dbReference>
<proteinExistence type="inferred from homology"/>
<accession>Q4A8T6</accession>
<evidence type="ECO:0000255" key="1">
    <source>
        <dbReference type="HAMAP-Rule" id="MF_00480"/>
    </source>
</evidence>
<evidence type="ECO:0000305" key="2"/>
<name>RS7_MESH7</name>
<organism>
    <name type="scientific">Mesomycoplasma hyopneumoniae (strain 7448)</name>
    <name type="common">Mycoplasma hyopneumoniae</name>
    <dbReference type="NCBI Taxonomy" id="262722"/>
    <lineage>
        <taxon>Bacteria</taxon>
        <taxon>Bacillati</taxon>
        <taxon>Mycoplasmatota</taxon>
        <taxon>Mycoplasmoidales</taxon>
        <taxon>Metamycoplasmataceae</taxon>
        <taxon>Mesomycoplasma</taxon>
    </lineage>
</organism>
<comment type="function">
    <text evidence="1">One of the primary rRNA binding proteins, it binds directly to 16S rRNA where it nucleates assembly of the head domain of the 30S subunit. Is located at the subunit interface close to the decoding center, probably blocks exit of the E-site tRNA.</text>
</comment>
<comment type="subunit">
    <text evidence="1">Part of the 30S ribosomal subunit. Contacts proteins S9 and S11.</text>
</comment>
<comment type="similarity">
    <text evidence="1">Belongs to the universal ribosomal protein uS7 family.</text>
</comment>
<protein>
    <recommendedName>
        <fullName evidence="1">Small ribosomal subunit protein uS7</fullName>
    </recommendedName>
    <alternativeName>
        <fullName evidence="2">30S ribosomal protein S7</fullName>
    </alternativeName>
</protein>
<keyword id="KW-0687">Ribonucleoprotein</keyword>
<keyword id="KW-0689">Ribosomal protein</keyword>
<keyword id="KW-0694">RNA-binding</keyword>
<keyword id="KW-0699">rRNA-binding</keyword>
<keyword id="KW-0820">tRNA-binding</keyword>
<gene>
    <name evidence="1" type="primary">rpsG</name>
    <name type="ordered locus">MHP7448_0076</name>
</gene>
<sequence>MSRKKQAPVRNVLADPVFNSKLITKAINCTMLEGKKTTAQNILYSAFKLVEEKLQKDALEVFRQAVKNVTPLTEVRSRRIGGTNYQVPMEVRQKRQQTLALRWLILFARKRNEKTMIVKLANEIIDAYNKTGGAFKKKEDTHKMAEANRAFAHFKW</sequence>
<feature type="chain" id="PRO_0000226507" description="Small ribosomal subunit protein uS7">
    <location>
        <begin position="1"/>
        <end position="156"/>
    </location>
</feature>
<reference key="1">
    <citation type="journal article" date="2005" name="J. Bacteriol.">
        <title>Swine and poultry pathogens: the complete genome sequences of two strains of Mycoplasma hyopneumoniae and a strain of Mycoplasma synoviae.</title>
        <authorList>
            <person name="Vasconcelos A.T.R."/>
            <person name="Ferreira H.B."/>
            <person name="Bizarro C.V."/>
            <person name="Bonatto S.L."/>
            <person name="Carvalho M.O."/>
            <person name="Pinto P.M."/>
            <person name="Almeida D.F."/>
            <person name="Almeida L.G.P."/>
            <person name="Almeida R."/>
            <person name="Alves-Junior L."/>
            <person name="Assuncao E.N."/>
            <person name="Azevedo V.A.C."/>
            <person name="Bogo M.R."/>
            <person name="Brigido M.M."/>
            <person name="Brocchi M."/>
            <person name="Burity H.A."/>
            <person name="Camargo A.A."/>
            <person name="Camargo S.S."/>
            <person name="Carepo M.S."/>
            <person name="Carraro D.M."/>
            <person name="de Mattos Cascardo J.C."/>
            <person name="Castro L.A."/>
            <person name="Cavalcanti G."/>
            <person name="Chemale G."/>
            <person name="Collevatti R.G."/>
            <person name="Cunha C.W."/>
            <person name="Dallagiovanna B."/>
            <person name="Dambros B.P."/>
            <person name="Dellagostin O.A."/>
            <person name="Falcao C."/>
            <person name="Fantinatti-Garboggini F."/>
            <person name="Felipe M.S.S."/>
            <person name="Fiorentin L."/>
            <person name="Franco G.R."/>
            <person name="Freitas N.S.A."/>
            <person name="Frias D."/>
            <person name="Grangeiro T.B."/>
            <person name="Grisard E.C."/>
            <person name="Guimaraes C.T."/>
            <person name="Hungria M."/>
            <person name="Jardim S.N."/>
            <person name="Krieger M.A."/>
            <person name="Laurino J.P."/>
            <person name="Lima L.F.A."/>
            <person name="Lopes M.I."/>
            <person name="Loreto E.L.S."/>
            <person name="Madeira H.M.F."/>
            <person name="Manfio G.P."/>
            <person name="Maranhao A.Q."/>
            <person name="Martinkovics C.T."/>
            <person name="Medeiros S.R.B."/>
            <person name="Moreira M.A.M."/>
            <person name="Neiva M."/>
            <person name="Ramalho-Neto C.E."/>
            <person name="Nicolas M.F."/>
            <person name="Oliveira S.C."/>
            <person name="Paixao R.F.C."/>
            <person name="Pedrosa F.O."/>
            <person name="Pena S.D.J."/>
            <person name="Pereira M."/>
            <person name="Pereira-Ferrari L."/>
            <person name="Piffer I."/>
            <person name="Pinto L.S."/>
            <person name="Potrich D.P."/>
            <person name="Salim A.C.M."/>
            <person name="Santos F.R."/>
            <person name="Schmitt R."/>
            <person name="Schneider M.P.C."/>
            <person name="Schrank A."/>
            <person name="Schrank I.S."/>
            <person name="Schuck A.F."/>
            <person name="Seuanez H.N."/>
            <person name="Silva D.W."/>
            <person name="Silva R."/>
            <person name="Silva S.C."/>
            <person name="Soares C.M.A."/>
            <person name="Souza K.R.L."/>
            <person name="Souza R.C."/>
            <person name="Staats C.C."/>
            <person name="Steffens M.B.R."/>
            <person name="Teixeira S.M.R."/>
            <person name="Urmenyi T.P."/>
            <person name="Vainstein M.H."/>
            <person name="Zuccherato L.W."/>
            <person name="Simpson A.J.G."/>
            <person name="Zaha A."/>
        </authorList>
    </citation>
    <scope>NUCLEOTIDE SEQUENCE [LARGE SCALE GENOMIC DNA]</scope>
    <source>
        <strain>7448</strain>
    </source>
</reference>